<comment type="function">
    <text evidence="1">One of at least two accessory proteins for anaerobic nitric oxide (NO) reductase. Reduces the rubredoxin moiety of NO reductase.</text>
</comment>
<comment type="catalytic activity">
    <reaction evidence="1">
        <text>2 reduced [nitric oxide reductase rubredoxin domain] + NAD(+) + H(+) = 2 oxidized [nitric oxide reductase rubredoxin domain] + NADH</text>
        <dbReference type="Rhea" id="RHEA:42960"/>
        <dbReference type="Rhea" id="RHEA-COMP:10304"/>
        <dbReference type="Rhea" id="RHEA-COMP:10305"/>
        <dbReference type="ChEBI" id="CHEBI:15378"/>
        <dbReference type="ChEBI" id="CHEBI:29033"/>
        <dbReference type="ChEBI" id="CHEBI:29034"/>
        <dbReference type="ChEBI" id="CHEBI:57540"/>
        <dbReference type="ChEBI" id="CHEBI:57945"/>
    </reaction>
</comment>
<comment type="cofactor">
    <cofactor evidence="1">
        <name>FAD</name>
        <dbReference type="ChEBI" id="CHEBI:57692"/>
    </cofactor>
</comment>
<comment type="pathway">
    <text evidence="1">Nitrogen metabolism; nitric oxide reduction.</text>
</comment>
<comment type="subcellular location">
    <subcellularLocation>
        <location evidence="1">Cytoplasm</location>
    </subcellularLocation>
</comment>
<comment type="similarity">
    <text evidence="1">Belongs to the FAD-dependent oxidoreductase family.</text>
</comment>
<sequence length="377" mass="41407">MSNGIVIIGSGFAARQLVKNIRKQDASIPLTLIAADSMDEYNKPDLSHVISQGQRADDLTRQTAGEFAEQFNLRLFPHTWVTDIDAEAHVVKSQNNQWQYDKLVLATGASAFVPPVPGRELMLTLNSQQEYRACETQLRDARRVLIIGGGLIGSELAMDFCRAGKMVTLIDNAASILASLMPPEVSSRLQHRLTEMGVHLLLKSQLQGLEKTDSGILATLDRQRCIEVDAVIAATGLRPETALARRAGLTINRGVCVDSYLQTSNADIYALGDCAEINGQVLPFLQPIQLSAMVLAKNLLGNNTPLKLPAMLVKIKTPELPLHLAGETQRQDLRWQINTERQGMVARGVDDADQLRAFVVSEDRMKEAFGLLKTLSM</sequence>
<keyword id="KW-0963">Cytoplasm</keyword>
<keyword id="KW-0274">FAD</keyword>
<keyword id="KW-0285">Flavoprotein</keyword>
<keyword id="KW-0520">NAD</keyword>
<keyword id="KW-0560">Oxidoreductase</keyword>
<protein>
    <recommendedName>
        <fullName evidence="1">Nitric oxide reductase FlRd-NAD(+) reductase</fullName>
        <ecNumber evidence="1">1.18.1.-</ecNumber>
    </recommendedName>
    <alternativeName>
        <fullName evidence="1">Flavorubredoxin reductase</fullName>
        <shortName evidence="1">FlRd-reductase</shortName>
        <shortName evidence="1">FlavoRb reductase</shortName>
    </alternativeName>
</protein>
<reference key="1">
    <citation type="journal article" date="2009" name="PLoS Genet.">
        <title>Organised genome dynamics in the Escherichia coli species results in highly diverse adaptive paths.</title>
        <authorList>
            <person name="Touchon M."/>
            <person name="Hoede C."/>
            <person name="Tenaillon O."/>
            <person name="Barbe V."/>
            <person name="Baeriswyl S."/>
            <person name="Bidet P."/>
            <person name="Bingen E."/>
            <person name="Bonacorsi S."/>
            <person name="Bouchier C."/>
            <person name="Bouvet O."/>
            <person name="Calteau A."/>
            <person name="Chiapello H."/>
            <person name="Clermont O."/>
            <person name="Cruveiller S."/>
            <person name="Danchin A."/>
            <person name="Diard M."/>
            <person name="Dossat C."/>
            <person name="Karoui M.E."/>
            <person name="Frapy E."/>
            <person name="Garry L."/>
            <person name="Ghigo J.M."/>
            <person name="Gilles A.M."/>
            <person name="Johnson J."/>
            <person name="Le Bouguenec C."/>
            <person name="Lescat M."/>
            <person name="Mangenot S."/>
            <person name="Martinez-Jehanne V."/>
            <person name="Matic I."/>
            <person name="Nassif X."/>
            <person name="Oztas S."/>
            <person name="Petit M.A."/>
            <person name="Pichon C."/>
            <person name="Rouy Z."/>
            <person name="Ruf C.S."/>
            <person name="Schneider D."/>
            <person name="Tourret J."/>
            <person name="Vacherie B."/>
            <person name="Vallenet D."/>
            <person name="Medigue C."/>
            <person name="Rocha E.P.C."/>
            <person name="Denamur E."/>
        </authorList>
    </citation>
    <scope>NUCLEOTIDE SEQUENCE [LARGE SCALE GENOMIC DNA]</scope>
    <source>
        <strain>ED1a</strain>
    </source>
</reference>
<evidence type="ECO:0000255" key="1">
    <source>
        <dbReference type="HAMAP-Rule" id="MF_01313"/>
    </source>
</evidence>
<name>NORW_ECO81</name>
<proteinExistence type="inferred from homology"/>
<dbReference type="EC" id="1.18.1.-" evidence="1"/>
<dbReference type="EMBL" id="CU928162">
    <property type="protein sequence ID" value="CAR09177.1"/>
    <property type="molecule type" value="Genomic_DNA"/>
</dbReference>
<dbReference type="RefSeq" id="WP_000064712.1">
    <property type="nucleotide sequence ID" value="NC_011745.1"/>
</dbReference>
<dbReference type="SMR" id="B7MYL1"/>
<dbReference type="KEGG" id="ecq:ECED1_3160"/>
<dbReference type="HOGENOM" id="CLU_003291_4_4_6"/>
<dbReference type="UniPathway" id="UPA00638"/>
<dbReference type="Proteomes" id="UP000000748">
    <property type="component" value="Chromosome"/>
</dbReference>
<dbReference type="GO" id="GO:0005737">
    <property type="term" value="C:cytoplasm"/>
    <property type="evidence" value="ECO:0007669"/>
    <property type="project" value="UniProtKB-SubCell"/>
</dbReference>
<dbReference type="GO" id="GO:0016731">
    <property type="term" value="F:oxidoreductase activity, acting on iron-sulfur proteins as donors, NAD or NADP as acceptor"/>
    <property type="evidence" value="ECO:0007669"/>
    <property type="project" value="UniProtKB-UniRule"/>
</dbReference>
<dbReference type="FunFam" id="3.30.390.120:FF:000001">
    <property type="entry name" value="Nitric oxide reductase FlRd-NAD(+) reductase"/>
    <property type="match status" value="1"/>
</dbReference>
<dbReference type="FunFam" id="3.50.50.60:FF:000075">
    <property type="entry name" value="Nitric oxide reductase FlRd-NAD(+) reductase"/>
    <property type="match status" value="1"/>
</dbReference>
<dbReference type="Gene3D" id="3.30.390.120">
    <property type="match status" value="1"/>
</dbReference>
<dbReference type="Gene3D" id="3.50.50.60">
    <property type="entry name" value="FAD/NAD(P)-binding domain"/>
    <property type="match status" value="2"/>
</dbReference>
<dbReference type="HAMAP" id="MF_01313">
    <property type="entry name" value="NorW"/>
    <property type="match status" value="1"/>
</dbReference>
<dbReference type="InterPro" id="IPR050260">
    <property type="entry name" value="FAD-bd_OxRdtase"/>
</dbReference>
<dbReference type="InterPro" id="IPR036188">
    <property type="entry name" value="FAD/NAD-bd_sf"/>
</dbReference>
<dbReference type="InterPro" id="IPR023753">
    <property type="entry name" value="FAD/NAD-binding_dom"/>
</dbReference>
<dbReference type="InterPro" id="IPR023961">
    <property type="entry name" value="NO_rdtase_NorW"/>
</dbReference>
<dbReference type="InterPro" id="IPR041364">
    <property type="entry name" value="Rbx-bd"/>
</dbReference>
<dbReference type="NCBIfam" id="NF003437">
    <property type="entry name" value="PRK04965.1"/>
    <property type="match status" value="1"/>
</dbReference>
<dbReference type="PANTHER" id="PTHR43429:SF3">
    <property type="entry name" value="NITRITE REDUCTASE [NAD(P)H]"/>
    <property type="match status" value="1"/>
</dbReference>
<dbReference type="PANTHER" id="PTHR43429">
    <property type="entry name" value="PYRIDINE NUCLEOTIDE-DISULFIDE OXIDOREDUCTASE DOMAIN-CONTAINING"/>
    <property type="match status" value="1"/>
</dbReference>
<dbReference type="Pfam" id="PF07992">
    <property type="entry name" value="Pyr_redox_2"/>
    <property type="match status" value="1"/>
</dbReference>
<dbReference type="Pfam" id="PF18113">
    <property type="entry name" value="Rbx_binding"/>
    <property type="match status" value="1"/>
</dbReference>
<dbReference type="PRINTS" id="PR00368">
    <property type="entry name" value="FADPNR"/>
</dbReference>
<dbReference type="PRINTS" id="PR00411">
    <property type="entry name" value="PNDRDTASEI"/>
</dbReference>
<dbReference type="SUPFAM" id="SSF51905">
    <property type="entry name" value="FAD/NAD(P)-binding domain"/>
    <property type="match status" value="1"/>
</dbReference>
<accession>B7MYL1</accession>
<feature type="chain" id="PRO_1000165585" description="Nitric oxide reductase FlRd-NAD(+) reductase">
    <location>
        <begin position="1"/>
        <end position="377"/>
    </location>
</feature>
<organism>
    <name type="scientific">Escherichia coli O81 (strain ED1a)</name>
    <dbReference type="NCBI Taxonomy" id="585397"/>
    <lineage>
        <taxon>Bacteria</taxon>
        <taxon>Pseudomonadati</taxon>
        <taxon>Pseudomonadota</taxon>
        <taxon>Gammaproteobacteria</taxon>
        <taxon>Enterobacterales</taxon>
        <taxon>Enterobacteriaceae</taxon>
        <taxon>Escherichia</taxon>
    </lineage>
</organism>
<gene>
    <name evidence="1" type="primary">norW</name>
    <name evidence="1" type="synonym">flrR</name>
    <name type="ordered locus">ECED1_3160</name>
</gene>